<accession>Q9ES74</accession>
<accession>Q3UEV7</accession>
<name>NEK7_MOUSE</name>
<dbReference type="EC" id="2.7.11.34" evidence="3"/>
<dbReference type="EMBL" id="AF217650">
    <property type="protein sequence ID" value="AAG16652.1"/>
    <property type="molecule type" value="mRNA"/>
</dbReference>
<dbReference type="EMBL" id="BC037697">
    <property type="protein sequence ID" value="AAH37697.1"/>
    <property type="molecule type" value="mRNA"/>
</dbReference>
<dbReference type="EMBL" id="AK035502">
    <property type="protein sequence ID" value="BAC29080.1"/>
    <property type="molecule type" value="mRNA"/>
</dbReference>
<dbReference type="EMBL" id="AK088173">
    <property type="protein sequence ID" value="BAC40190.1"/>
    <property type="molecule type" value="mRNA"/>
</dbReference>
<dbReference type="EMBL" id="AK149308">
    <property type="protein sequence ID" value="BAE28804.1"/>
    <property type="molecule type" value="mRNA"/>
</dbReference>
<dbReference type="CCDS" id="CCDS15332.1"/>
<dbReference type="RefSeq" id="NP_001298077.1">
    <property type="nucleotide sequence ID" value="NM_001311148.1"/>
</dbReference>
<dbReference type="RefSeq" id="NP_067618.1">
    <property type="nucleotide sequence ID" value="NM_021605.5"/>
</dbReference>
<dbReference type="SMR" id="Q9ES74"/>
<dbReference type="BioGRID" id="208541">
    <property type="interactions" value="3"/>
</dbReference>
<dbReference type="DIP" id="DIP-61936N"/>
<dbReference type="FunCoup" id="Q9ES74">
    <property type="interactions" value="2762"/>
</dbReference>
<dbReference type="IntAct" id="Q9ES74">
    <property type="interactions" value="4"/>
</dbReference>
<dbReference type="MINT" id="Q9ES74"/>
<dbReference type="STRING" id="10090.ENSMUSP00000140903"/>
<dbReference type="GlyGen" id="Q9ES74">
    <property type="glycosylation" value="1 site, 1 O-linked glycan (1 site)"/>
</dbReference>
<dbReference type="iPTMnet" id="Q9ES74"/>
<dbReference type="PhosphoSitePlus" id="Q9ES74"/>
<dbReference type="PaxDb" id="10090-ENSMUSP00000027642"/>
<dbReference type="PeptideAtlas" id="Q9ES74"/>
<dbReference type="ProteomicsDB" id="287367"/>
<dbReference type="Pumba" id="Q9ES74"/>
<dbReference type="Antibodypedia" id="20630">
    <property type="antibodies" value="368 antibodies from 36 providers"/>
</dbReference>
<dbReference type="DNASU" id="59125"/>
<dbReference type="Ensembl" id="ENSMUST00000186017.7">
    <property type="protein sequence ID" value="ENSMUSP00000140903.3"/>
    <property type="gene ID" value="ENSMUSG00000026393.11"/>
</dbReference>
<dbReference type="Ensembl" id="ENSMUST00000187407.7">
    <property type="protein sequence ID" value="ENSMUSP00000140635.2"/>
    <property type="gene ID" value="ENSMUSG00000026393.11"/>
</dbReference>
<dbReference type="GeneID" id="59125"/>
<dbReference type="KEGG" id="mmu:59125"/>
<dbReference type="UCSC" id="uc007cvn.1">
    <property type="organism name" value="mouse"/>
</dbReference>
<dbReference type="AGR" id="MGI:1890645"/>
<dbReference type="CTD" id="140609"/>
<dbReference type="MGI" id="MGI:1890645">
    <property type="gene designation" value="Nek7"/>
</dbReference>
<dbReference type="VEuPathDB" id="HostDB:ENSMUSG00000026393"/>
<dbReference type="eggNOG" id="KOG0591">
    <property type="taxonomic scope" value="Eukaryota"/>
</dbReference>
<dbReference type="GeneTree" id="ENSGT00940000156725"/>
<dbReference type="HOGENOM" id="CLU_000288_63_23_1"/>
<dbReference type="InParanoid" id="Q9ES74"/>
<dbReference type="OMA" id="SEQMNAH"/>
<dbReference type="OrthoDB" id="248923at2759"/>
<dbReference type="PhylomeDB" id="Q9ES74"/>
<dbReference type="TreeFam" id="TF105135"/>
<dbReference type="BioGRID-ORCS" id="59125">
    <property type="hits" value="3 hits in 81 CRISPR screens"/>
</dbReference>
<dbReference type="ChiTaRS" id="Nek7">
    <property type="organism name" value="mouse"/>
</dbReference>
<dbReference type="PRO" id="PR:Q9ES74"/>
<dbReference type="Proteomes" id="UP000000589">
    <property type="component" value="Chromosome 1"/>
</dbReference>
<dbReference type="RNAct" id="Q9ES74">
    <property type="molecule type" value="protein"/>
</dbReference>
<dbReference type="Bgee" id="ENSMUSG00000026393">
    <property type="expression patterns" value="Expressed in extensor digitorum longus and 287 other cell types or tissues"/>
</dbReference>
<dbReference type="ExpressionAtlas" id="Q9ES74">
    <property type="expression patterns" value="baseline and differential"/>
</dbReference>
<dbReference type="GO" id="GO:0005813">
    <property type="term" value="C:centrosome"/>
    <property type="evidence" value="ECO:0007669"/>
    <property type="project" value="UniProtKB-SubCell"/>
</dbReference>
<dbReference type="GO" id="GO:0005737">
    <property type="term" value="C:cytoplasm"/>
    <property type="evidence" value="ECO:0000314"/>
    <property type="project" value="UniProtKB"/>
</dbReference>
<dbReference type="GO" id="GO:0005654">
    <property type="term" value="C:nucleoplasm"/>
    <property type="evidence" value="ECO:0007669"/>
    <property type="project" value="Ensembl"/>
</dbReference>
<dbReference type="GO" id="GO:0005634">
    <property type="term" value="C:nucleus"/>
    <property type="evidence" value="ECO:0000314"/>
    <property type="project" value="UniProtKB"/>
</dbReference>
<dbReference type="GO" id="GO:0000922">
    <property type="term" value="C:spindle pole"/>
    <property type="evidence" value="ECO:0007669"/>
    <property type="project" value="UniProtKB-SubCell"/>
</dbReference>
<dbReference type="GO" id="GO:0005524">
    <property type="term" value="F:ATP binding"/>
    <property type="evidence" value="ECO:0007669"/>
    <property type="project" value="UniProtKB-KW"/>
</dbReference>
<dbReference type="GO" id="GO:0046872">
    <property type="term" value="F:metal ion binding"/>
    <property type="evidence" value="ECO:0007669"/>
    <property type="project" value="UniProtKB-KW"/>
</dbReference>
<dbReference type="GO" id="GO:0140677">
    <property type="term" value="F:molecular function activator activity"/>
    <property type="evidence" value="ECO:0000314"/>
    <property type="project" value="UniProtKB"/>
</dbReference>
<dbReference type="GO" id="GO:0106310">
    <property type="term" value="F:protein serine kinase activity"/>
    <property type="evidence" value="ECO:0007669"/>
    <property type="project" value="RHEA"/>
</dbReference>
<dbReference type="GO" id="GO:0004674">
    <property type="term" value="F:protein serine/threonine kinase activity"/>
    <property type="evidence" value="ECO:0000250"/>
    <property type="project" value="UniProtKB"/>
</dbReference>
<dbReference type="GO" id="GO:0035865">
    <property type="term" value="P:cellular response to potassium ion"/>
    <property type="evidence" value="ECO:0000314"/>
    <property type="project" value="UniProtKB"/>
</dbReference>
<dbReference type="GO" id="GO:1900227">
    <property type="term" value="P:positive regulation of NLRP3 inflammasome complex assembly"/>
    <property type="evidence" value="ECO:0000314"/>
    <property type="project" value="UniProtKB"/>
</dbReference>
<dbReference type="GO" id="GO:0032206">
    <property type="term" value="P:positive regulation of telomere maintenance"/>
    <property type="evidence" value="ECO:0007669"/>
    <property type="project" value="Ensembl"/>
</dbReference>
<dbReference type="GO" id="GO:0006468">
    <property type="term" value="P:protein phosphorylation"/>
    <property type="evidence" value="ECO:0000250"/>
    <property type="project" value="UniProtKB"/>
</dbReference>
<dbReference type="GO" id="GO:0007346">
    <property type="term" value="P:regulation of mitotic cell cycle"/>
    <property type="evidence" value="ECO:0000250"/>
    <property type="project" value="UniProtKB"/>
</dbReference>
<dbReference type="CDD" id="cd08224">
    <property type="entry name" value="STKc_Nek6_7"/>
    <property type="match status" value="1"/>
</dbReference>
<dbReference type="FunFam" id="1.10.510.10:FF:000148">
    <property type="entry name" value="Serine/threonine-protein kinase Nek7"/>
    <property type="match status" value="1"/>
</dbReference>
<dbReference type="FunFam" id="3.30.200.20:FF:000204">
    <property type="entry name" value="Serine/threonine-protein kinase Nek7"/>
    <property type="match status" value="1"/>
</dbReference>
<dbReference type="FunFam" id="3.30.200.20:FF:000240">
    <property type="entry name" value="Serine/threonine-protein kinase Nek7"/>
    <property type="match status" value="1"/>
</dbReference>
<dbReference type="Gene3D" id="3.30.200.20">
    <property type="entry name" value="Phosphorylase Kinase, domain 1"/>
    <property type="match status" value="2"/>
</dbReference>
<dbReference type="Gene3D" id="1.10.510.10">
    <property type="entry name" value="Transferase(Phosphotransferase) domain 1"/>
    <property type="match status" value="1"/>
</dbReference>
<dbReference type="InterPro" id="IPR011009">
    <property type="entry name" value="Kinase-like_dom_sf"/>
</dbReference>
<dbReference type="InterPro" id="IPR000719">
    <property type="entry name" value="Prot_kinase_dom"/>
</dbReference>
<dbReference type="InterPro" id="IPR017441">
    <property type="entry name" value="Protein_kinase_ATP_BS"/>
</dbReference>
<dbReference type="InterPro" id="IPR001245">
    <property type="entry name" value="Ser-Thr/Tyr_kinase_cat_dom"/>
</dbReference>
<dbReference type="InterPro" id="IPR008271">
    <property type="entry name" value="Ser/Thr_kinase_AS"/>
</dbReference>
<dbReference type="PANTHER" id="PTHR43289">
    <property type="entry name" value="MITOGEN-ACTIVATED PROTEIN KINASE KINASE KINASE 20-RELATED"/>
    <property type="match status" value="1"/>
</dbReference>
<dbReference type="PANTHER" id="PTHR43289:SF2">
    <property type="entry name" value="SERINE_THREONINE-PROTEIN KINASE NEK7"/>
    <property type="match status" value="1"/>
</dbReference>
<dbReference type="Pfam" id="PF00069">
    <property type="entry name" value="Pkinase"/>
    <property type="match status" value="1"/>
</dbReference>
<dbReference type="PIRSF" id="PIRSF000654">
    <property type="entry name" value="Integrin-linked_kinase"/>
    <property type="match status" value="1"/>
</dbReference>
<dbReference type="PRINTS" id="PR00109">
    <property type="entry name" value="TYRKINASE"/>
</dbReference>
<dbReference type="SMART" id="SM00220">
    <property type="entry name" value="S_TKc"/>
    <property type="match status" value="1"/>
</dbReference>
<dbReference type="SUPFAM" id="SSF56112">
    <property type="entry name" value="Protein kinase-like (PK-like)"/>
    <property type="match status" value="1"/>
</dbReference>
<dbReference type="PROSITE" id="PS00107">
    <property type="entry name" value="PROTEIN_KINASE_ATP"/>
    <property type="match status" value="1"/>
</dbReference>
<dbReference type="PROSITE" id="PS50011">
    <property type="entry name" value="PROTEIN_KINASE_DOM"/>
    <property type="match status" value="1"/>
</dbReference>
<dbReference type="PROSITE" id="PS00108">
    <property type="entry name" value="PROTEIN_KINASE_ST"/>
    <property type="match status" value="1"/>
</dbReference>
<reference key="1">
    <citation type="journal article" date="2000" name="Genomics">
        <title>Isolation and characterization of two evolutionarily conserved murine kinases (Nek6 and Nek7) related to the fungal mitotic regulator, NIMA.</title>
        <authorList>
            <person name="Kandli M."/>
            <person name="Feige E."/>
            <person name="Chen A."/>
            <person name="Kilfin G."/>
            <person name="Motro B."/>
        </authorList>
    </citation>
    <scope>NUCLEOTIDE SEQUENCE [MRNA]</scope>
</reference>
<reference key="2">
    <citation type="journal article" date="2005" name="Science">
        <title>The transcriptional landscape of the mammalian genome.</title>
        <authorList>
            <person name="Carninci P."/>
            <person name="Kasukawa T."/>
            <person name="Katayama S."/>
            <person name="Gough J."/>
            <person name="Frith M.C."/>
            <person name="Maeda N."/>
            <person name="Oyama R."/>
            <person name="Ravasi T."/>
            <person name="Lenhard B."/>
            <person name="Wells C."/>
            <person name="Kodzius R."/>
            <person name="Shimokawa K."/>
            <person name="Bajic V.B."/>
            <person name="Brenner S.E."/>
            <person name="Batalov S."/>
            <person name="Forrest A.R."/>
            <person name="Zavolan M."/>
            <person name="Davis M.J."/>
            <person name="Wilming L.G."/>
            <person name="Aidinis V."/>
            <person name="Allen J.E."/>
            <person name="Ambesi-Impiombato A."/>
            <person name="Apweiler R."/>
            <person name="Aturaliya R.N."/>
            <person name="Bailey T.L."/>
            <person name="Bansal M."/>
            <person name="Baxter L."/>
            <person name="Beisel K.W."/>
            <person name="Bersano T."/>
            <person name="Bono H."/>
            <person name="Chalk A.M."/>
            <person name="Chiu K.P."/>
            <person name="Choudhary V."/>
            <person name="Christoffels A."/>
            <person name="Clutterbuck D.R."/>
            <person name="Crowe M.L."/>
            <person name="Dalla E."/>
            <person name="Dalrymple B.P."/>
            <person name="de Bono B."/>
            <person name="Della Gatta G."/>
            <person name="di Bernardo D."/>
            <person name="Down T."/>
            <person name="Engstrom P."/>
            <person name="Fagiolini M."/>
            <person name="Faulkner G."/>
            <person name="Fletcher C.F."/>
            <person name="Fukushima T."/>
            <person name="Furuno M."/>
            <person name="Futaki S."/>
            <person name="Gariboldi M."/>
            <person name="Georgii-Hemming P."/>
            <person name="Gingeras T.R."/>
            <person name="Gojobori T."/>
            <person name="Green R.E."/>
            <person name="Gustincich S."/>
            <person name="Harbers M."/>
            <person name="Hayashi Y."/>
            <person name="Hensch T.K."/>
            <person name="Hirokawa N."/>
            <person name="Hill D."/>
            <person name="Huminiecki L."/>
            <person name="Iacono M."/>
            <person name="Ikeo K."/>
            <person name="Iwama A."/>
            <person name="Ishikawa T."/>
            <person name="Jakt M."/>
            <person name="Kanapin A."/>
            <person name="Katoh M."/>
            <person name="Kawasawa Y."/>
            <person name="Kelso J."/>
            <person name="Kitamura H."/>
            <person name="Kitano H."/>
            <person name="Kollias G."/>
            <person name="Krishnan S.P."/>
            <person name="Kruger A."/>
            <person name="Kummerfeld S.K."/>
            <person name="Kurochkin I.V."/>
            <person name="Lareau L.F."/>
            <person name="Lazarevic D."/>
            <person name="Lipovich L."/>
            <person name="Liu J."/>
            <person name="Liuni S."/>
            <person name="McWilliam S."/>
            <person name="Madan Babu M."/>
            <person name="Madera M."/>
            <person name="Marchionni L."/>
            <person name="Matsuda H."/>
            <person name="Matsuzawa S."/>
            <person name="Miki H."/>
            <person name="Mignone F."/>
            <person name="Miyake S."/>
            <person name="Morris K."/>
            <person name="Mottagui-Tabar S."/>
            <person name="Mulder N."/>
            <person name="Nakano N."/>
            <person name="Nakauchi H."/>
            <person name="Ng P."/>
            <person name="Nilsson R."/>
            <person name="Nishiguchi S."/>
            <person name="Nishikawa S."/>
            <person name="Nori F."/>
            <person name="Ohara O."/>
            <person name="Okazaki Y."/>
            <person name="Orlando V."/>
            <person name="Pang K.C."/>
            <person name="Pavan W.J."/>
            <person name="Pavesi G."/>
            <person name="Pesole G."/>
            <person name="Petrovsky N."/>
            <person name="Piazza S."/>
            <person name="Reed J."/>
            <person name="Reid J.F."/>
            <person name="Ring B.Z."/>
            <person name="Ringwald M."/>
            <person name="Rost B."/>
            <person name="Ruan Y."/>
            <person name="Salzberg S.L."/>
            <person name="Sandelin A."/>
            <person name="Schneider C."/>
            <person name="Schoenbach C."/>
            <person name="Sekiguchi K."/>
            <person name="Semple C.A."/>
            <person name="Seno S."/>
            <person name="Sessa L."/>
            <person name="Sheng Y."/>
            <person name="Shibata Y."/>
            <person name="Shimada H."/>
            <person name="Shimada K."/>
            <person name="Silva D."/>
            <person name="Sinclair B."/>
            <person name="Sperling S."/>
            <person name="Stupka E."/>
            <person name="Sugiura K."/>
            <person name="Sultana R."/>
            <person name="Takenaka Y."/>
            <person name="Taki K."/>
            <person name="Tammoja K."/>
            <person name="Tan S.L."/>
            <person name="Tang S."/>
            <person name="Taylor M.S."/>
            <person name="Tegner J."/>
            <person name="Teichmann S.A."/>
            <person name="Ueda H.R."/>
            <person name="van Nimwegen E."/>
            <person name="Verardo R."/>
            <person name="Wei C.L."/>
            <person name="Yagi K."/>
            <person name="Yamanishi H."/>
            <person name="Zabarovsky E."/>
            <person name="Zhu S."/>
            <person name="Zimmer A."/>
            <person name="Hide W."/>
            <person name="Bult C."/>
            <person name="Grimmond S.M."/>
            <person name="Teasdale R.D."/>
            <person name="Liu E.T."/>
            <person name="Brusic V."/>
            <person name="Quackenbush J."/>
            <person name="Wahlestedt C."/>
            <person name="Mattick J.S."/>
            <person name="Hume D.A."/>
            <person name="Kai C."/>
            <person name="Sasaki D."/>
            <person name="Tomaru Y."/>
            <person name="Fukuda S."/>
            <person name="Kanamori-Katayama M."/>
            <person name="Suzuki M."/>
            <person name="Aoki J."/>
            <person name="Arakawa T."/>
            <person name="Iida J."/>
            <person name="Imamura K."/>
            <person name="Itoh M."/>
            <person name="Kato T."/>
            <person name="Kawaji H."/>
            <person name="Kawagashira N."/>
            <person name="Kawashima T."/>
            <person name="Kojima M."/>
            <person name="Kondo S."/>
            <person name="Konno H."/>
            <person name="Nakano K."/>
            <person name="Ninomiya N."/>
            <person name="Nishio T."/>
            <person name="Okada M."/>
            <person name="Plessy C."/>
            <person name="Shibata K."/>
            <person name="Shiraki T."/>
            <person name="Suzuki S."/>
            <person name="Tagami M."/>
            <person name="Waki K."/>
            <person name="Watahiki A."/>
            <person name="Okamura-Oho Y."/>
            <person name="Suzuki H."/>
            <person name="Kawai J."/>
            <person name="Hayashizaki Y."/>
        </authorList>
    </citation>
    <scope>NUCLEOTIDE SEQUENCE [LARGE SCALE MRNA]</scope>
    <source>
        <strain>C57BL/6J</strain>
        <strain>NOD</strain>
        <tissue>Retina</tissue>
        <tissue>Thymus</tissue>
        <tissue>Urinary bladder</tissue>
    </source>
</reference>
<reference key="3">
    <citation type="journal article" date="2004" name="Genome Res.">
        <title>The status, quality, and expansion of the NIH full-length cDNA project: the Mammalian Gene Collection (MGC).</title>
        <authorList>
            <consortium name="The MGC Project Team"/>
        </authorList>
    </citation>
    <scope>NUCLEOTIDE SEQUENCE [LARGE SCALE MRNA]</scope>
    <source>
        <strain>Czech II</strain>
    </source>
</reference>
<reference key="4">
    <citation type="journal article" date="2010" name="Cell">
        <title>A tissue-specific atlas of mouse protein phosphorylation and expression.</title>
        <authorList>
            <person name="Huttlin E.L."/>
            <person name="Jedrychowski M.P."/>
            <person name="Elias J.E."/>
            <person name="Goswami T."/>
            <person name="Rad R."/>
            <person name="Beausoleil S.A."/>
            <person name="Villen J."/>
            <person name="Haas W."/>
            <person name="Sowa M.E."/>
            <person name="Gygi S.P."/>
        </authorList>
    </citation>
    <scope>IDENTIFICATION BY MASS SPECTROMETRY [LARGE SCALE ANALYSIS]</scope>
    <source>
        <tissue>Brain</tissue>
        <tissue>Heart</tissue>
        <tissue>Kidney</tissue>
        <tissue>Liver</tissue>
        <tissue>Lung</tissue>
        <tissue>Pancreas</tissue>
        <tissue>Spleen</tissue>
    </source>
</reference>
<reference key="5">
    <citation type="journal article" date="2010" name="Oncogene">
        <title>Nek7 kinase targeting leads to early mortality, cytokinesis disturbance and polyploidy.</title>
        <authorList>
            <person name="Salem H."/>
            <person name="Rachmin I."/>
            <person name="Yissachar N."/>
            <person name="Cohen S."/>
            <person name="Amiel A."/>
            <person name="Haffner R."/>
            <person name="Lavi L."/>
            <person name="Motro B."/>
        </authorList>
    </citation>
    <scope>FUNCTION</scope>
</reference>
<reference key="6">
    <citation type="journal article" date="2015" name="Biochem. Biophys. Res. Commun.">
        <title>Anks3 alters the sub-cellular localization of the Nek7 kinase.</title>
        <authorList>
            <person name="Ramachandran H."/>
            <person name="Engel C."/>
            <person name="Mueller B."/>
            <person name="Dengjel J."/>
            <person name="Walz G."/>
            <person name="Yakulov T.A."/>
        </authorList>
    </citation>
    <scope>INTERACTION WITH ANKS3</scope>
    <scope>SUBCELLULAR LOCATION</scope>
</reference>
<reference key="7">
    <citation type="journal article" date="2016" name="J. Biol. Chem.">
        <title>A Genome-wide CRISPR (clustered regularly interspaced short palindromic repeats) screen identifies NEK7 as an essential component of NLRP3 Inflammasome activation.</title>
        <authorList>
            <person name="Schmid-Burgk J.L."/>
            <person name="Chauhan D."/>
            <person name="Schmidt T."/>
            <person name="Ebert T.S."/>
            <person name="Reinhardt J."/>
            <person name="Endl E."/>
            <person name="Hornung V."/>
        </authorList>
    </citation>
    <scope>FUNCTION</scope>
    <scope>INTERACTION WITH NLRP3</scope>
</reference>
<reference key="8">
    <citation type="journal article" date="2016" name="Nature">
        <title>NEK7 is an essential mediator of NLRP3 activation downstream of potassium efflux.</title>
        <authorList>
            <person name="He Y."/>
            <person name="Zeng M.Y."/>
            <person name="Yang D."/>
            <person name="Motro B."/>
            <person name="Nunez G."/>
        </authorList>
    </citation>
    <scope>FUNCTION</scope>
    <scope>INTERACTION WITH NLRP3</scope>
    <scope>MUTAGENESIS OF 63-LYS-LYS-64; LYS-63 AND LYS-64</scope>
</reference>
<reference key="9">
    <citation type="journal article" date="2016" name="Nat. Immunol.">
        <title>NLRP3 activation and mitosis are mutually exclusive events coordinated by NEK7, a new inflammasome component.</title>
        <authorList>
            <person name="Shi H."/>
            <person name="Wang Y."/>
            <person name="Li X."/>
            <person name="Zhan X."/>
            <person name="Tang M."/>
            <person name="Fina M."/>
            <person name="Su L."/>
            <person name="Pratt D."/>
            <person name="Bu C.H."/>
            <person name="Hildebrand S."/>
            <person name="Lyon S."/>
            <person name="Scott L."/>
            <person name="Quan J."/>
            <person name="Sun Q."/>
            <person name="Russell J."/>
            <person name="Arnett S."/>
            <person name="Jurek P."/>
            <person name="Chen D."/>
            <person name="Kravchenko V.V."/>
            <person name="Mathison J.C."/>
            <person name="Moresco E.M."/>
            <person name="Monson N.L."/>
            <person name="Ulevitch R.J."/>
            <person name="Beutler B."/>
        </authorList>
    </citation>
    <scope>FUNCTION</scope>
    <scope>DISRUPTION PHENOTYPE</scope>
    <scope>INTERACTION WITH NLRP3</scope>
</reference>
<sequence length="302" mass="34537">MDEQSQGMQGPPVTQFQPQKALRPDMGYNTLANFRIEKKIGRGQFSEVYRASCLLDGVPVALKKVQIFDLMDAKARADCIKEIDLLKQLNHPNVIKYYASFIEDNELNIVLELADAGDLSRMIKHFKKQKRLIPERTVWKYFVQLCSALDHMHSRRVMHRDIKPANVFITATGVVKLGDLGLGRFFSSKTTAAHSLVGTPYYMSPERIHENGYNFKSDIWSLGCLLYEMAALQSPFYGDKMNLYSLCKKIEQCDYPPLPSDHYSEELRQLVNICINPDPEKRPDIAYVYDVAKRMHACTAST</sequence>
<comment type="function">
    <text evidence="1 3 6 8 9 10">Protein kinase which plays an important role in mitotic cell cycle progression (PubMed:20473324). Required for microtubule nucleation activity of the centrosome, robust mitotic spindle formation and cytokinesis (PubMed:20473324). Phosphorylates EML4 at 'Ser-146', promoting its dissociation from microtubules during mitosis which is required for efficient chromosome congression (By similarity). Phosphorylates RPS6KB1 (By similarity). Acts as an essential activator of the NLRP3 inflammasome assembly independently of its kinase activity (PubMed:26642356, PubMed:26814970). Acts by unlocking NLRP3 following NLRP3 tranlocation into the microtubule organizing center (MTOC), relieving NLRP3 autoinhibition and promoting formation of the NLRP3:PYCARD complex, and activation of CASP1 (PubMed:26553871, PubMed:26642356, PubMed:26814970). Serves as a cellular switch that enforces mutual exclusivity of the inflammasome response and cell division: interaction with NEK9 prevents interaction with NLRP3 and activation of the inflammasome during mitosis (PubMed:26642356, PubMed:26814970).</text>
</comment>
<comment type="catalytic activity">
    <reaction evidence="3">
        <text>L-seryl-[protein] + ATP = O-phospho-L-seryl-[protein] + ADP + H(+)</text>
        <dbReference type="Rhea" id="RHEA:17989"/>
        <dbReference type="Rhea" id="RHEA-COMP:9863"/>
        <dbReference type="Rhea" id="RHEA-COMP:11604"/>
        <dbReference type="ChEBI" id="CHEBI:15378"/>
        <dbReference type="ChEBI" id="CHEBI:29999"/>
        <dbReference type="ChEBI" id="CHEBI:30616"/>
        <dbReference type="ChEBI" id="CHEBI:83421"/>
        <dbReference type="ChEBI" id="CHEBI:456216"/>
        <dbReference type="EC" id="2.7.11.34"/>
    </reaction>
    <physiologicalReaction direction="left-to-right" evidence="3">
        <dbReference type="Rhea" id="RHEA:17990"/>
    </physiologicalReaction>
</comment>
<comment type="catalytic activity">
    <reaction evidence="3">
        <text>L-threonyl-[protein] + ATP = O-phospho-L-threonyl-[protein] + ADP + H(+)</text>
        <dbReference type="Rhea" id="RHEA:46608"/>
        <dbReference type="Rhea" id="RHEA-COMP:11060"/>
        <dbReference type="Rhea" id="RHEA-COMP:11605"/>
        <dbReference type="ChEBI" id="CHEBI:15378"/>
        <dbReference type="ChEBI" id="CHEBI:30013"/>
        <dbReference type="ChEBI" id="CHEBI:30616"/>
        <dbReference type="ChEBI" id="CHEBI:61977"/>
        <dbReference type="ChEBI" id="CHEBI:456216"/>
        <dbReference type="EC" id="2.7.11.34"/>
    </reaction>
    <physiologicalReaction direction="left-to-right" evidence="3">
        <dbReference type="Rhea" id="RHEA:46609"/>
    </physiologicalReaction>
</comment>
<comment type="cofactor">
    <cofactor evidence="2">
        <name>Mg(2+)</name>
        <dbReference type="ChEBI" id="CHEBI:18420"/>
    </cofactor>
</comment>
<comment type="activity regulation">
    <text evidence="3">Binding to NEK9 stimulates its activity by releasing the autoinhibitory function of Tyr-97.</text>
</comment>
<comment type="subunit">
    <text evidence="3 7 8 9 10">Monomer (By similarity). Interacts with NEK9; interaction takes place during mitosis; it relieves NEK7 autoinhibition and prevents interaction with NLRP3 (By similarity). Interacts with ANKS3; this interaction alters the subcellular distribution of NEK7 by preventing its nuclear translocation (PubMed:26188091). Interacts (via N-terminus) with NLRP3 (via LRR repeat domain); the interaction is required for the formation of the complex NLRP3:PYCARD, oligomerization of PYCARD and activation of CASP1 (PubMed:26553871, PubMed:26642356, PubMed:26814970).</text>
</comment>
<comment type="interaction">
    <interactant intactId="EBI-16193749">
        <id>Q9ES74</id>
    </interactant>
    <interactant intactId="EBI-6910832">
        <id>Q8R4B8</id>
        <label>Nlrp3</label>
    </interactant>
    <organismsDiffer>false</organismsDiffer>
    <experiments>2</experiments>
</comment>
<comment type="interaction">
    <interactant intactId="EBI-16193749">
        <id>Q9ES74</id>
    </interactant>
    <interactant intactId="EBI-6253230">
        <id>Q96P20</id>
        <label>NLRP3</label>
    </interactant>
    <organismsDiffer>true</organismsDiffer>
    <experiments>2</experiments>
</comment>
<comment type="subcellular location">
    <subcellularLocation>
        <location evidence="7">Nucleus</location>
    </subcellularLocation>
    <subcellularLocation>
        <location evidence="7">Cytoplasm</location>
    </subcellularLocation>
    <subcellularLocation>
        <location evidence="3">Cytoplasm</location>
        <location evidence="3">Cytoskeleton</location>
        <location evidence="3">Spindle pole</location>
    </subcellularLocation>
    <subcellularLocation>
        <location evidence="3">Cytoplasm</location>
        <location evidence="3">Cytoskeleton</location>
        <location evidence="3">Microtubule organizing center</location>
        <location evidence="3">Centrosome</location>
    </subcellularLocation>
    <text evidence="3 7">Present at centrosome throughout the cell cycle (By similarity). Also detected at spindle midzone of the anaphase cells and eventually concentrates at the midbody (By similarity). Interaction with ANKS3 prevents its translocation to the nucleus (PubMed:26188091).</text>
</comment>
<comment type="domain">
    <text evidence="3">Displays an autoinhibited conformation: Tyr-97 side chain points into the active site, interacts with the activation loop, and blocks the alphaC helix. The autoinhibitory conformation is released upon binding with NEK9.</text>
</comment>
<comment type="domain">
    <text evidence="3">The NTE (N-terminal extension) motif is a structural component of the catalytic domain and thus contributes to activity.</text>
</comment>
<comment type="PTM">
    <text evidence="3">Phosphorylation at Ser-195 required for its activation.</text>
</comment>
<comment type="disruption phenotype">
    <text evidence="9">Mutant mice are viable but are born at sub-Mendelian ratios. They further suffer from severe growth retardation, infertility, abnormal gait and slight paralysis of the limbs. In an experimental autoimmune encephalitis (EAE) model, mutant mice exhibited reduced disease severity relative to wild-type mice, as well as reduced recruitment of lymphocytes, monocytes/microglia, and NK cells to the spinal cord.</text>
</comment>
<comment type="similarity">
    <text evidence="12">Belongs to the protein kinase superfamily. NEK Ser/Thr protein kinase family. NIMA subfamily.</text>
</comment>
<proteinExistence type="evidence at protein level"/>
<evidence type="ECO:0000250" key="1">
    <source>
        <dbReference type="UniProtKB" id="D3ZBE5"/>
    </source>
</evidence>
<evidence type="ECO:0000250" key="2">
    <source>
        <dbReference type="UniProtKB" id="Q8TD19"/>
    </source>
</evidence>
<evidence type="ECO:0000250" key="3">
    <source>
        <dbReference type="UniProtKB" id="Q8TDX7"/>
    </source>
</evidence>
<evidence type="ECO:0000255" key="4">
    <source>
        <dbReference type="PROSITE-ProRule" id="PRU00159"/>
    </source>
</evidence>
<evidence type="ECO:0000255" key="5">
    <source>
        <dbReference type="PROSITE-ProRule" id="PRU10027"/>
    </source>
</evidence>
<evidence type="ECO:0000269" key="6">
    <source>
    </source>
</evidence>
<evidence type="ECO:0000269" key="7">
    <source>
    </source>
</evidence>
<evidence type="ECO:0000269" key="8">
    <source>
    </source>
</evidence>
<evidence type="ECO:0000269" key="9">
    <source>
    </source>
</evidence>
<evidence type="ECO:0000269" key="10">
    <source>
    </source>
</evidence>
<evidence type="ECO:0000303" key="11">
    <source>
    </source>
</evidence>
<evidence type="ECO:0000305" key="12"/>
<evidence type="ECO:0000312" key="13">
    <source>
        <dbReference type="MGI" id="MGI:1890645"/>
    </source>
</evidence>
<gene>
    <name evidence="11 13" type="primary">Nek7</name>
</gene>
<keyword id="KW-0007">Acetylation</keyword>
<keyword id="KW-0067">ATP-binding</keyword>
<keyword id="KW-0963">Cytoplasm</keyword>
<keyword id="KW-0206">Cytoskeleton</keyword>
<keyword id="KW-0418">Kinase</keyword>
<keyword id="KW-0460">Magnesium</keyword>
<keyword id="KW-0479">Metal-binding</keyword>
<keyword id="KW-0547">Nucleotide-binding</keyword>
<keyword id="KW-0539">Nucleus</keyword>
<keyword id="KW-0597">Phosphoprotein</keyword>
<keyword id="KW-1185">Reference proteome</keyword>
<keyword id="KW-0723">Serine/threonine-protein kinase</keyword>
<keyword id="KW-0808">Transferase</keyword>
<organism>
    <name type="scientific">Mus musculus</name>
    <name type="common">Mouse</name>
    <dbReference type="NCBI Taxonomy" id="10090"/>
    <lineage>
        <taxon>Eukaryota</taxon>
        <taxon>Metazoa</taxon>
        <taxon>Chordata</taxon>
        <taxon>Craniata</taxon>
        <taxon>Vertebrata</taxon>
        <taxon>Euteleostomi</taxon>
        <taxon>Mammalia</taxon>
        <taxon>Eutheria</taxon>
        <taxon>Euarchontoglires</taxon>
        <taxon>Glires</taxon>
        <taxon>Rodentia</taxon>
        <taxon>Myomorpha</taxon>
        <taxon>Muroidea</taxon>
        <taxon>Muridae</taxon>
        <taxon>Murinae</taxon>
        <taxon>Mus</taxon>
        <taxon>Mus</taxon>
    </lineage>
</organism>
<feature type="chain" id="PRO_0000086431" description="Serine/threonine-protein kinase Nek7">
    <location>
        <begin position="1"/>
        <end position="302"/>
    </location>
</feature>
<feature type="domain" description="Protein kinase" evidence="4">
    <location>
        <begin position="34"/>
        <end position="299"/>
    </location>
</feature>
<feature type="region of interest" description="NTE motif" evidence="3">
    <location>
        <begin position="20"/>
        <end position="33"/>
    </location>
</feature>
<feature type="active site" description="Proton acceptor" evidence="4 5">
    <location>
        <position position="161"/>
    </location>
</feature>
<feature type="binding site" evidence="4">
    <location>
        <begin position="40"/>
        <end position="48"/>
    </location>
    <ligand>
        <name>ATP</name>
        <dbReference type="ChEBI" id="CHEBI:30616"/>
    </ligand>
</feature>
<feature type="binding site" evidence="4">
    <location>
        <position position="63"/>
    </location>
    <ligand>
        <name>ATP</name>
        <dbReference type="ChEBI" id="CHEBI:30616"/>
    </ligand>
</feature>
<feature type="site" description="Autoinhibitory" evidence="3">
    <location>
        <position position="97"/>
    </location>
</feature>
<feature type="modified residue" description="N-acetylmethionine" evidence="3">
    <location>
        <position position="1"/>
    </location>
</feature>
<feature type="modified residue" description="Phosphoserine" evidence="3">
    <location>
        <position position="5"/>
    </location>
</feature>
<feature type="modified residue" description="Phosphoserine; by NEK9" evidence="3">
    <location>
        <position position="195"/>
    </location>
</feature>
<feature type="mutagenesis site" description="No effect on interaction with NLRP3." evidence="10">
    <original>KK</original>
    <variation>MM</variation>
    <location>
        <begin position="63"/>
        <end position="64"/>
    </location>
</feature>
<feature type="mutagenesis site" description="No effect on interaction with NLRP3." evidence="10">
    <original>K</original>
    <variation>M</variation>
    <location>
        <position position="63"/>
    </location>
</feature>
<feature type="mutagenesis site" description="No effect on interaction with NLRP3." evidence="10">
    <original>K</original>
    <variation>M</variation>
    <location>
        <position position="64"/>
    </location>
</feature>
<protein>
    <recommendedName>
        <fullName evidence="12">Serine/threonine-protein kinase Nek7</fullName>
        <ecNumber evidence="3">2.7.11.34</ecNumber>
    </recommendedName>
    <alternativeName>
        <fullName evidence="11">Never in mitosis A-related kinase 7</fullName>
        <shortName evidence="11">NimA-related protein kinase 7</shortName>
    </alternativeName>
</protein>